<evidence type="ECO:0000255" key="1">
    <source>
        <dbReference type="HAMAP-Rule" id="MF_00473"/>
    </source>
</evidence>
<comment type="function">
    <text evidence="1">Catalyzes the reversible isomerization of glucose-6-phosphate to fructose-6-phosphate.</text>
</comment>
<comment type="catalytic activity">
    <reaction evidence="1">
        <text>alpha-D-glucose 6-phosphate = beta-D-fructose 6-phosphate</text>
        <dbReference type="Rhea" id="RHEA:11816"/>
        <dbReference type="ChEBI" id="CHEBI:57634"/>
        <dbReference type="ChEBI" id="CHEBI:58225"/>
        <dbReference type="EC" id="5.3.1.9"/>
    </reaction>
</comment>
<comment type="pathway">
    <text evidence="1">Carbohydrate biosynthesis; gluconeogenesis.</text>
</comment>
<comment type="pathway">
    <text evidence="1">Carbohydrate degradation; glycolysis; D-glyceraldehyde 3-phosphate and glycerone phosphate from D-glucose: step 2/4.</text>
</comment>
<comment type="subcellular location">
    <subcellularLocation>
        <location evidence="1">Cytoplasm</location>
    </subcellularLocation>
</comment>
<comment type="similarity">
    <text evidence="1">Belongs to the GPI family.</text>
</comment>
<organism>
    <name type="scientific">Xanthomonas campestris pv. campestris (strain ATCC 33913 / DSM 3586 / NCPPB 528 / LMG 568 / P 25)</name>
    <dbReference type="NCBI Taxonomy" id="190485"/>
    <lineage>
        <taxon>Bacteria</taxon>
        <taxon>Pseudomonadati</taxon>
        <taxon>Pseudomonadota</taxon>
        <taxon>Gammaproteobacteria</taxon>
        <taxon>Lysobacterales</taxon>
        <taxon>Lysobacteraceae</taxon>
        <taxon>Xanthomonas</taxon>
    </lineage>
</organism>
<name>G6PI_XANCP</name>
<gene>
    <name evidence="1" type="primary">pgi</name>
    <name type="ordered locus">XCC1771</name>
</gene>
<dbReference type="EC" id="5.3.1.9" evidence="1"/>
<dbReference type="EMBL" id="AE008922">
    <property type="protein sequence ID" value="AAM41061.1"/>
    <property type="molecule type" value="Genomic_DNA"/>
</dbReference>
<dbReference type="RefSeq" id="NP_637137.1">
    <property type="nucleotide sequence ID" value="NC_003902.1"/>
</dbReference>
<dbReference type="RefSeq" id="WP_011036944.1">
    <property type="nucleotide sequence ID" value="NC_003902.1"/>
</dbReference>
<dbReference type="SMR" id="Q8P9S7"/>
<dbReference type="STRING" id="190485.XCC1771"/>
<dbReference type="EnsemblBacteria" id="AAM41061">
    <property type="protein sequence ID" value="AAM41061"/>
    <property type="gene ID" value="XCC1771"/>
</dbReference>
<dbReference type="KEGG" id="xcc:XCC1771"/>
<dbReference type="PATRIC" id="fig|190485.4.peg.1888"/>
<dbReference type="eggNOG" id="COG0166">
    <property type="taxonomic scope" value="Bacteria"/>
</dbReference>
<dbReference type="HOGENOM" id="CLU_017947_3_1_6"/>
<dbReference type="OrthoDB" id="140919at2"/>
<dbReference type="UniPathway" id="UPA00109">
    <property type="reaction ID" value="UER00181"/>
</dbReference>
<dbReference type="UniPathway" id="UPA00138"/>
<dbReference type="Proteomes" id="UP000001010">
    <property type="component" value="Chromosome"/>
</dbReference>
<dbReference type="GO" id="GO:0005829">
    <property type="term" value="C:cytosol"/>
    <property type="evidence" value="ECO:0000318"/>
    <property type="project" value="GO_Central"/>
</dbReference>
<dbReference type="GO" id="GO:0097367">
    <property type="term" value="F:carbohydrate derivative binding"/>
    <property type="evidence" value="ECO:0007669"/>
    <property type="project" value="InterPro"/>
</dbReference>
<dbReference type="GO" id="GO:0004347">
    <property type="term" value="F:glucose-6-phosphate isomerase activity"/>
    <property type="evidence" value="ECO:0000318"/>
    <property type="project" value="GO_Central"/>
</dbReference>
<dbReference type="GO" id="GO:0048029">
    <property type="term" value="F:monosaccharide binding"/>
    <property type="evidence" value="ECO:0000318"/>
    <property type="project" value="GO_Central"/>
</dbReference>
<dbReference type="GO" id="GO:0006094">
    <property type="term" value="P:gluconeogenesis"/>
    <property type="evidence" value="ECO:0000318"/>
    <property type="project" value="GO_Central"/>
</dbReference>
<dbReference type="GO" id="GO:0051156">
    <property type="term" value="P:glucose 6-phosphate metabolic process"/>
    <property type="evidence" value="ECO:0000318"/>
    <property type="project" value="GO_Central"/>
</dbReference>
<dbReference type="GO" id="GO:0006096">
    <property type="term" value="P:glycolytic process"/>
    <property type="evidence" value="ECO:0000318"/>
    <property type="project" value="GO_Central"/>
</dbReference>
<dbReference type="CDD" id="cd05015">
    <property type="entry name" value="SIS_PGI_1"/>
    <property type="match status" value="1"/>
</dbReference>
<dbReference type="CDD" id="cd05016">
    <property type="entry name" value="SIS_PGI_2"/>
    <property type="match status" value="1"/>
</dbReference>
<dbReference type="Gene3D" id="1.10.1390.10">
    <property type="match status" value="1"/>
</dbReference>
<dbReference type="Gene3D" id="3.40.50.10490">
    <property type="entry name" value="Glucose-6-phosphate isomerase like protein, domain 1"/>
    <property type="match status" value="2"/>
</dbReference>
<dbReference type="HAMAP" id="MF_00473">
    <property type="entry name" value="G6P_isomerase"/>
    <property type="match status" value="1"/>
</dbReference>
<dbReference type="InterPro" id="IPR001672">
    <property type="entry name" value="G6P_Isomerase"/>
</dbReference>
<dbReference type="InterPro" id="IPR023096">
    <property type="entry name" value="G6P_Isomerase_C"/>
</dbReference>
<dbReference type="InterPro" id="IPR018189">
    <property type="entry name" value="Phosphoglucose_isomerase_CS"/>
</dbReference>
<dbReference type="InterPro" id="IPR046348">
    <property type="entry name" value="SIS_dom_sf"/>
</dbReference>
<dbReference type="InterPro" id="IPR035476">
    <property type="entry name" value="SIS_PGI_1"/>
</dbReference>
<dbReference type="InterPro" id="IPR035482">
    <property type="entry name" value="SIS_PGI_2"/>
</dbReference>
<dbReference type="NCBIfam" id="NF001211">
    <property type="entry name" value="PRK00179.1"/>
    <property type="match status" value="1"/>
</dbReference>
<dbReference type="PANTHER" id="PTHR11469">
    <property type="entry name" value="GLUCOSE-6-PHOSPHATE ISOMERASE"/>
    <property type="match status" value="1"/>
</dbReference>
<dbReference type="PANTHER" id="PTHR11469:SF1">
    <property type="entry name" value="GLUCOSE-6-PHOSPHATE ISOMERASE"/>
    <property type="match status" value="1"/>
</dbReference>
<dbReference type="Pfam" id="PF00342">
    <property type="entry name" value="PGI"/>
    <property type="match status" value="1"/>
</dbReference>
<dbReference type="PRINTS" id="PR00662">
    <property type="entry name" value="G6PISOMERASE"/>
</dbReference>
<dbReference type="SUPFAM" id="SSF53697">
    <property type="entry name" value="SIS domain"/>
    <property type="match status" value="1"/>
</dbReference>
<dbReference type="PROSITE" id="PS00765">
    <property type="entry name" value="P_GLUCOSE_ISOMERASE_1"/>
    <property type="match status" value="1"/>
</dbReference>
<dbReference type="PROSITE" id="PS00174">
    <property type="entry name" value="P_GLUCOSE_ISOMERASE_2"/>
    <property type="match status" value="1"/>
</dbReference>
<dbReference type="PROSITE" id="PS51463">
    <property type="entry name" value="P_GLUCOSE_ISOMERASE_3"/>
    <property type="match status" value="1"/>
</dbReference>
<accession>Q8P9S7</accession>
<feature type="chain" id="PRO_0000180769" description="Glucose-6-phosphate isomerase">
    <location>
        <begin position="1"/>
        <end position="504"/>
    </location>
</feature>
<feature type="active site" description="Proton donor" evidence="1">
    <location>
        <position position="333"/>
    </location>
</feature>
<feature type="active site" evidence="1">
    <location>
        <position position="364"/>
    </location>
</feature>
<feature type="active site" evidence="1">
    <location>
        <position position="473"/>
    </location>
</feature>
<proteinExistence type="inferred from homology"/>
<sequence>MTHTNGFDALHAHAQRLRGAAIPALLAAEPQRPTQYARQVGPLYFNFARQKYDRAALDALFAIARERDLAGAFQRLFRGEQVNVTEQRAALHTALRGDLTDAPVASDAYATAAEVRQRVGALIQQLEGTDVTDIVSVGIGGSDLGPRLVADALRAPSGARFRVHFVSNVDGAAMQRTLATLDPARTAGILISKTFGTQETLLNGSILHAWLGGSERLYAVSANPERAAKAFDIAPGRVLPMWDWVGGRYSLWSAVGFPIALAIGFERFEQLLDGAAQFDAHVLNTPLEENVAVLHGLTAVWNRNLLGSATHAVMTYDQRLALLPAYLQQLVMESLGKRVKLDGAAVDSDTVAVWWGGAGTDVQHSFFQALHQGTSVVPADFIGTVHNDDPYAENHVALMANVLAQTEALANGQDSSDPHRSYPGGRPSTVILLDALTPQALGALISMYEHSVYVQSVMWGINAFDQFGVELGKQLASQLLPALKGEAADVADPVTRELLAKLRG</sequence>
<keyword id="KW-0963">Cytoplasm</keyword>
<keyword id="KW-0312">Gluconeogenesis</keyword>
<keyword id="KW-0324">Glycolysis</keyword>
<keyword id="KW-0413">Isomerase</keyword>
<keyword id="KW-1185">Reference proteome</keyword>
<protein>
    <recommendedName>
        <fullName evidence="1">Glucose-6-phosphate isomerase</fullName>
        <shortName evidence="1">GPI</shortName>
        <ecNumber evidence="1">5.3.1.9</ecNumber>
    </recommendedName>
    <alternativeName>
        <fullName evidence="1">Phosphoglucose isomerase</fullName>
        <shortName evidence="1">PGI</shortName>
    </alternativeName>
    <alternativeName>
        <fullName evidence="1">Phosphohexose isomerase</fullName>
        <shortName evidence="1">PHI</shortName>
    </alternativeName>
</protein>
<reference key="1">
    <citation type="journal article" date="2002" name="Nature">
        <title>Comparison of the genomes of two Xanthomonas pathogens with differing host specificities.</title>
        <authorList>
            <person name="da Silva A.C.R."/>
            <person name="Ferro J.A."/>
            <person name="Reinach F.C."/>
            <person name="Farah C.S."/>
            <person name="Furlan L.R."/>
            <person name="Quaggio R.B."/>
            <person name="Monteiro-Vitorello C.B."/>
            <person name="Van Sluys M.A."/>
            <person name="Almeida N.F. Jr."/>
            <person name="Alves L.M.C."/>
            <person name="do Amaral A.M."/>
            <person name="Bertolini M.C."/>
            <person name="Camargo L.E.A."/>
            <person name="Camarotte G."/>
            <person name="Cannavan F."/>
            <person name="Cardozo J."/>
            <person name="Chambergo F."/>
            <person name="Ciapina L.P."/>
            <person name="Cicarelli R.M.B."/>
            <person name="Coutinho L.L."/>
            <person name="Cursino-Santos J.R."/>
            <person name="El-Dorry H."/>
            <person name="Faria J.B."/>
            <person name="Ferreira A.J.S."/>
            <person name="Ferreira R.C.C."/>
            <person name="Ferro M.I.T."/>
            <person name="Formighieri E.F."/>
            <person name="Franco M.C."/>
            <person name="Greggio C.C."/>
            <person name="Gruber A."/>
            <person name="Katsuyama A.M."/>
            <person name="Kishi L.T."/>
            <person name="Leite R.P."/>
            <person name="Lemos E.G.M."/>
            <person name="Lemos M.V.F."/>
            <person name="Locali E.C."/>
            <person name="Machado M.A."/>
            <person name="Madeira A.M.B.N."/>
            <person name="Martinez-Rossi N.M."/>
            <person name="Martins E.C."/>
            <person name="Meidanis J."/>
            <person name="Menck C.F.M."/>
            <person name="Miyaki C.Y."/>
            <person name="Moon D.H."/>
            <person name="Moreira L.M."/>
            <person name="Novo M.T.M."/>
            <person name="Okura V.K."/>
            <person name="Oliveira M.C."/>
            <person name="Oliveira V.R."/>
            <person name="Pereira H.A."/>
            <person name="Rossi A."/>
            <person name="Sena J.A.D."/>
            <person name="Silva C."/>
            <person name="de Souza R.F."/>
            <person name="Spinola L.A.F."/>
            <person name="Takita M.A."/>
            <person name="Tamura R.E."/>
            <person name="Teixeira E.C."/>
            <person name="Tezza R.I.D."/>
            <person name="Trindade dos Santos M."/>
            <person name="Truffi D."/>
            <person name="Tsai S.M."/>
            <person name="White F.F."/>
            <person name="Setubal J.C."/>
            <person name="Kitajima J.P."/>
        </authorList>
    </citation>
    <scope>NUCLEOTIDE SEQUENCE [LARGE SCALE GENOMIC DNA]</scope>
    <source>
        <strain>ATCC 33913 / DSM 3586 / NCPPB 528 / LMG 568 / P 25</strain>
    </source>
</reference>